<protein>
    <recommendedName>
        <fullName evidence="1">Ribosomal RNA large subunit methyltransferase H</fullName>
        <ecNumber evidence="1">2.1.1.177</ecNumber>
    </recommendedName>
    <alternativeName>
        <fullName evidence="1">23S rRNA (pseudouridine1915-N3)-methyltransferase</fullName>
    </alternativeName>
    <alternativeName>
        <fullName evidence="1">23S rRNA m3Psi1915 methyltransferase</fullName>
    </alternativeName>
    <alternativeName>
        <fullName evidence="1">rRNA (pseudouridine-N3-)-methyltransferase RlmH</fullName>
    </alternativeName>
</protein>
<organism>
    <name type="scientific">Clostridium perfringens (strain ATCC 13124 / DSM 756 / JCM 1290 / NCIMB 6125 / NCTC 8237 / Type A)</name>
    <dbReference type="NCBI Taxonomy" id="195103"/>
    <lineage>
        <taxon>Bacteria</taxon>
        <taxon>Bacillati</taxon>
        <taxon>Bacillota</taxon>
        <taxon>Clostridia</taxon>
        <taxon>Eubacteriales</taxon>
        <taxon>Clostridiaceae</taxon>
        <taxon>Clostridium</taxon>
    </lineage>
</organism>
<gene>
    <name evidence="1" type="primary">rlmH</name>
    <name type="ordered locus">CPF_2927</name>
</gene>
<comment type="function">
    <text evidence="1">Specifically methylates the pseudouridine at position 1915 (m3Psi1915) in 23S rRNA.</text>
</comment>
<comment type="catalytic activity">
    <reaction evidence="1">
        <text>pseudouridine(1915) in 23S rRNA + S-adenosyl-L-methionine = N(3)-methylpseudouridine(1915) in 23S rRNA + S-adenosyl-L-homocysteine + H(+)</text>
        <dbReference type="Rhea" id="RHEA:42752"/>
        <dbReference type="Rhea" id="RHEA-COMP:10221"/>
        <dbReference type="Rhea" id="RHEA-COMP:10222"/>
        <dbReference type="ChEBI" id="CHEBI:15378"/>
        <dbReference type="ChEBI" id="CHEBI:57856"/>
        <dbReference type="ChEBI" id="CHEBI:59789"/>
        <dbReference type="ChEBI" id="CHEBI:65314"/>
        <dbReference type="ChEBI" id="CHEBI:74486"/>
        <dbReference type="EC" id="2.1.1.177"/>
    </reaction>
</comment>
<comment type="subunit">
    <text evidence="1">Homodimer.</text>
</comment>
<comment type="subcellular location">
    <subcellularLocation>
        <location evidence="1">Cytoplasm</location>
    </subcellularLocation>
</comment>
<comment type="similarity">
    <text evidence="1">Belongs to the RNA methyltransferase RlmH family.</text>
</comment>
<accession>Q0TM49</accession>
<dbReference type="EC" id="2.1.1.177" evidence="1"/>
<dbReference type="EMBL" id="CP000246">
    <property type="protein sequence ID" value="ABG82437.1"/>
    <property type="molecule type" value="Genomic_DNA"/>
</dbReference>
<dbReference type="RefSeq" id="WP_003456814.1">
    <property type="nucleotide sequence ID" value="NC_008261.1"/>
</dbReference>
<dbReference type="SMR" id="Q0TM49"/>
<dbReference type="STRING" id="195103.CPF_2927"/>
<dbReference type="PaxDb" id="195103-CPF_2927"/>
<dbReference type="GeneID" id="93000794"/>
<dbReference type="KEGG" id="cpf:CPF_2927"/>
<dbReference type="eggNOG" id="COG1576">
    <property type="taxonomic scope" value="Bacteria"/>
</dbReference>
<dbReference type="HOGENOM" id="CLU_100552_0_0_9"/>
<dbReference type="Proteomes" id="UP000001823">
    <property type="component" value="Chromosome"/>
</dbReference>
<dbReference type="GO" id="GO:0005737">
    <property type="term" value="C:cytoplasm"/>
    <property type="evidence" value="ECO:0007669"/>
    <property type="project" value="UniProtKB-SubCell"/>
</dbReference>
<dbReference type="GO" id="GO:0070038">
    <property type="term" value="F:rRNA (pseudouridine-N3-)-methyltransferase activity"/>
    <property type="evidence" value="ECO:0007669"/>
    <property type="project" value="UniProtKB-UniRule"/>
</dbReference>
<dbReference type="CDD" id="cd18081">
    <property type="entry name" value="RlmH-like"/>
    <property type="match status" value="1"/>
</dbReference>
<dbReference type="Gene3D" id="3.40.1280.10">
    <property type="match status" value="1"/>
</dbReference>
<dbReference type="HAMAP" id="MF_00658">
    <property type="entry name" value="23SrRNA_methyltr_H"/>
    <property type="match status" value="1"/>
</dbReference>
<dbReference type="InterPro" id="IPR029028">
    <property type="entry name" value="Alpha/beta_knot_MTases"/>
</dbReference>
<dbReference type="InterPro" id="IPR003742">
    <property type="entry name" value="RlmH-like"/>
</dbReference>
<dbReference type="InterPro" id="IPR029026">
    <property type="entry name" value="tRNA_m1G_MTases_N"/>
</dbReference>
<dbReference type="NCBIfam" id="NF000985">
    <property type="entry name" value="PRK00103.1-3"/>
    <property type="match status" value="1"/>
</dbReference>
<dbReference type="NCBIfam" id="TIGR00246">
    <property type="entry name" value="tRNA_RlmH_YbeA"/>
    <property type="match status" value="1"/>
</dbReference>
<dbReference type="PANTHER" id="PTHR33603">
    <property type="entry name" value="METHYLTRANSFERASE"/>
    <property type="match status" value="1"/>
</dbReference>
<dbReference type="PANTHER" id="PTHR33603:SF1">
    <property type="entry name" value="RIBOSOMAL RNA LARGE SUBUNIT METHYLTRANSFERASE H"/>
    <property type="match status" value="1"/>
</dbReference>
<dbReference type="Pfam" id="PF02590">
    <property type="entry name" value="SPOUT_MTase"/>
    <property type="match status" value="1"/>
</dbReference>
<dbReference type="PIRSF" id="PIRSF004505">
    <property type="entry name" value="MT_bac"/>
    <property type="match status" value="1"/>
</dbReference>
<dbReference type="SUPFAM" id="SSF75217">
    <property type="entry name" value="alpha/beta knot"/>
    <property type="match status" value="1"/>
</dbReference>
<feature type="chain" id="PRO_0000260546" description="Ribosomal RNA large subunit methyltransferase H">
    <location>
        <begin position="1"/>
        <end position="159"/>
    </location>
</feature>
<feature type="binding site" evidence="1">
    <location>
        <position position="108"/>
    </location>
    <ligand>
        <name>S-adenosyl-L-methionine</name>
        <dbReference type="ChEBI" id="CHEBI:59789"/>
    </ligand>
</feature>
<feature type="binding site" evidence="1">
    <location>
        <begin position="127"/>
        <end position="132"/>
    </location>
    <ligand>
        <name>S-adenosyl-L-methionine</name>
        <dbReference type="ChEBI" id="CHEBI:59789"/>
    </ligand>
</feature>
<keyword id="KW-0963">Cytoplasm</keyword>
<keyword id="KW-0489">Methyltransferase</keyword>
<keyword id="KW-0698">rRNA processing</keyword>
<keyword id="KW-0949">S-adenosyl-L-methionine</keyword>
<keyword id="KW-0808">Transferase</keyword>
<sequence length="159" mass="18473">MNITVISVGKLKEKYLKQAIDEYSKRLSRYCKLEIIELPDEKTPDNASEKEELQIKEKEGKLILSKIKDNMHVIAMDLKGNEITSEKFSKYIENCGVMGNSNITFVIGGSLGLSQEVIKRADYKLCFSKMTFPHQLFRVMLLEQVYRAFRIMKNEPYHK</sequence>
<reference key="1">
    <citation type="journal article" date="2006" name="Genome Res.">
        <title>Skewed genomic variability in strains of the toxigenic bacterial pathogen, Clostridium perfringens.</title>
        <authorList>
            <person name="Myers G.S.A."/>
            <person name="Rasko D.A."/>
            <person name="Cheung J.K."/>
            <person name="Ravel J."/>
            <person name="Seshadri R."/>
            <person name="DeBoy R.T."/>
            <person name="Ren Q."/>
            <person name="Varga J."/>
            <person name="Awad M.M."/>
            <person name="Brinkac L.M."/>
            <person name="Daugherty S.C."/>
            <person name="Haft D.H."/>
            <person name="Dodson R.J."/>
            <person name="Madupu R."/>
            <person name="Nelson W.C."/>
            <person name="Rosovitz M.J."/>
            <person name="Sullivan S.A."/>
            <person name="Khouri H."/>
            <person name="Dimitrov G.I."/>
            <person name="Watkins K.L."/>
            <person name="Mulligan S."/>
            <person name="Benton J."/>
            <person name="Radune D."/>
            <person name="Fisher D.J."/>
            <person name="Atkins H.S."/>
            <person name="Hiscox T."/>
            <person name="Jost B.H."/>
            <person name="Billington S.J."/>
            <person name="Songer J.G."/>
            <person name="McClane B.A."/>
            <person name="Titball R.W."/>
            <person name="Rood J.I."/>
            <person name="Melville S.B."/>
            <person name="Paulsen I.T."/>
        </authorList>
    </citation>
    <scope>NUCLEOTIDE SEQUENCE [LARGE SCALE GENOMIC DNA]</scope>
    <source>
        <strain>ATCC 13124 / DSM 756 / JCM 1290 / NCIMB 6125 / NCTC 8237 / S 107 / Type A</strain>
    </source>
</reference>
<evidence type="ECO:0000255" key="1">
    <source>
        <dbReference type="HAMAP-Rule" id="MF_00658"/>
    </source>
</evidence>
<name>RLMH_CLOP1</name>
<proteinExistence type="inferred from homology"/>